<keyword id="KW-0010">Activator</keyword>
<keyword id="KW-0963">Cytoplasm</keyword>
<keyword id="KW-0238">DNA-binding</keyword>
<keyword id="KW-0479">Metal-binding</keyword>
<keyword id="KW-0539">Nucleus</keyword>
<keyword id="KW-0677">Repeat</keyword>
<keyword id="KW-0678">Repressor</keyword>
<keyword id="KW-0804">Transcription</keyword>
<keyword id="KW-0805">Transcription regulation</keyword>
<keyword id="KW-0862">Zinc</keyword>
<keyword id="KW-0863">Zinc-finger</keyword>
<reference key="1">
    <citation type="journal article" date="2001" name="Appl. Environ. Microbiol.">
        <title>pH signaling in Sclerotinia sclerotiorum: identification of a pacC/RIM1 homolog.</title>
        <authorList>
            <person name="Rollins J.A."/>
            <person name="Dickman M.B."/>
        </authorList>
    </citation>
    <scope>NUCLEOTIDE SEQUENCE [GENOMIC DNA]</scope>
    <scope>INDUCTION</scope>
</reference>
<organism>
    <name type="scientific">Sclerotinia sclerotiorum</name>
    <name type="common">White mold</name>
    <name type="synonym">Whetzelinia sclerotiorum</name>
    <dbReference type="NCBI Taxonomy" id="5180"/>
    <lineage>
        <taxon>Eukaryota</taxon>
        <taxon>Fungi</taxon>
        <taxon>Dikarya</taxon>
        <taxon>Ascomycota</taxon>
        <taxon>Pezizomycotina</taxon>
        <taxon>Leotiomycetes</taxon>
        <taxon>Helotiales</taxon>
        <taxon>Sclerotiniaceae</taxon>
        <taxon>Sclerotinia</taxon>
    </lineage>
</organism>
<protein>
    <recommendedName>
        <fullName>pH-response transcription factor pacC/RIM101</fullName>
    </recommendedName>
</protein>
<gene>
    <name type="primary">pac1</name>
</gene>
<sequence>MSSQDQQQQQQPAQTQTSTSSSSNNENATTATSSIQQNVVADDSLLCQWEKCSERCPTPEALFDHICEKHVGRKSTNNLNLTCGWNSCRTTTVKRDHITSHIRVHVPLKPHKCEFCGKAFKRPQDLKKHVKTHADDSVLLRTPEQSGGSNGGYRQPGGKVIANLQHLAANPMGYYDHNASMHPGSAGVYGNSHHGGHSGYYAPAHSQQSSYGGGPGYYQMSHNPDLGQHAAWDEKKRNFDNLNDFFGAAKRRQIDAHSYQQVNQRLMQLQGIPIGTGGGISDYIHSAPQLVPIDGHGGHGHGGPMPQHQYSLPLPNLRTKSDLNSIDQFLEQMQSTVYESSNAAAAAGIHQPGAHYTHQALNFRQSHSPPQTHIHNIGSMAPHVSTSYASAPMTATHSSHSVSSGTPALTPPSSSVSYTSGNSPMSSSGMSPISRHSSTSNAAYPNLPAVTLGYSPHHSATAPTSTLGTNFDSDPRRRYSGGVLQRSAGGLNSSQYRESMETSTVGSPTPSPKETTPRPESIVKTEVTNNIDPALSDAGSPSVRSVDTLESARDRAEEAWIENIRVIEALRRYVSDRLQNGEYVKDEEDEDVSMADTDMQDTQVKTEEKPVESLYPVLKTDDDDE</sequence>
<name>PACC_SCLSC</name>
<feature type="chain" id="PRO_0000046843" description="pH-response transcription factor pacC/RIM101">
    <location>
        <begin position="1"/>
        <end position="625"/>
    </location>
</feature>
<feature type="zinc finger region" description="C2H2-type 1" evidence="2">
    <location>
        <begin position="45"/>
        <end position="70"/>
    </location>
</feature>
<feature type="zinc finger region" description="C2H2-type 2" evidence="2">
    <location>
        <begin position="81"/>
        <end position="105"/>
    </location>
</feature>
<feature type="zinc finger region" description="C2H2-type 3" evidence="2">
    <location>
        <begin position="111"/>
        <end position="133"/>
    </location>
</feature>
<feature type="region of interest" description="Disordered" evidence="3">
    <location>
        <begin position="1"/>
        <end position="35"/>
    </location>
</feature>
<feature type="region of interest" description="Disordered" evidence="3">
    <location>
        <begin position="391"/>
        <end position="440"/>
    </location>
</feature>
<feature type="region of interest" description="Disordered" evidence="3">
    <location>
        <begin position="455"/>
        <end position="543"/>
    </location>
</feature>
<feature type="region of interest" description="Disordered" evidence="3">
    <location>
        <begin position="584"/>
        <end position="625"/>
    </location>
</feature>
<feature type="short sequence motif" description="YPX[LI] motif 1">
    <location>
        <begin position="444"/>
        <end position="447"/>
    </location>
</feature>
<feature type="short sequence motif" description="YPX[LI] motif 2">
    <location>
        <begin position="615"/>
        <end position="618"/>
    </location>
</feature>
<feature type="compositionally biased region" description="Low complexity" evidence="3">
    <location>
        <begin position="1"/>
        <end position="34"/>
    </location>
</feature>
<feature type="compositionally biased region" description="Polar residues" evidence="3">
    <location>
        <begin position="391"/>
        <end position="416"/>
    </location>
</feature>
<feature type="compositionally biased region" description="Low complexity" evidence="3">
    <location>
        <begin position="417"/>
        <end position="438"/>
    </location>
</feature>
<feature type="compositionally biased region" description="Polar residues" evidence="3">
    <location>
        <begin position="461"/>
        <end position="472"/>
    </location>
</feature>
<feature type="compositionally biased region" description="Polar residues" evidence="3">
    <location>
        <begin position="490"/>
        <end position="514"/>
    </location>
</feature>
<comment type="function">
    <text evidence="1">Transcription factor that mediates regulation of both acid- and alkaline-expressed genes in response to ambient pH. At alkaline ambient pH, activates transcription of alkaline-expressed genes (including pac1 itself) and represses transcription of acid-expressed genes (By similarity).</text>
</comment>
<comment type="subcellular location">
    <subcellularLocation>
        <location evidence="1">Cytoplasm</location>
    </subcellularLocation>
    <subcellularLocation>
        <location evidence="1">Nucleus</location>
    </subcellularLocation>
</comment>
<comment type="induction">
    <text evidence="4">By alkaline conditions.</text>
</comment>
<comment type="PTM">
    <text evidence="1">Activated by C-terminal proteolytic cleavage by signaling protease (probably palB/RIM13) at neutral to alkaline ambient pH.</text>
</comment>
<comment type="similarity">
    <text evidence="5">Belongs to the pacC/RIM101 family.</text>
</comment>
<evidence type="ECO:0000250" key="1"/>
<evidence type="ECO:0000255" key="2">
    <source>
        <dbReference type="PROSITE-ProRule" id="PRU00042"/>
    </source>
</evidence>
<evidence type="ECO:0000256" key="3">
    <source>
        <dbReference type="SAM" id="MobiDB-lite"/>
    </source>
</evidence>
<evidence type="ECO:0000269" key="4">
    <source>
    </source>
</evidence>
<evidence type="ECO:0000305" key="5"/>
<proteinExistence type="evidence at transcript level"/>
<dbReference type="EMBL" id="AY005467">
    <property type="protein sequence ID" value="AAF93178.1"/>
    <property type="molecule type" value="Genomic_DNA"/>
</dbReference>
<dbReference type="VEuPathDB" id="FungiDB:sscle_06g049830"/>
<dbReference type="OMA" id="QWGNCRT"/>
<dbReference type="PHI-base" id="PHI:314"/>
<dbReference type="GO" id="GO:0005737">
    <property type="term" value="C:cytoplasm"/>
    <property type="evidence" value="ECO:0007669"/>
    <property type="project" value="UniProtKB-SubCell"/>
</dbReference>
<dbReference type="GO" id="GO:0005634">
    <property type="term" value="C:nucleus"/>
    <property type="evidence" value="ECO:0007669"/>
    <property type="project" value="UniProtKB-SubCell"/>
</dbReference>
<dbReference type="GO" id="GO:0003677">
    <property type="term" value="F:DNA binding"/>
    <property type="evidence" value="ECO:0007669"/>
    <property type="project" value="UniProtKB-KW"/>
</dbReference>
<dbReference type="GO" id="GO:0008270">
    <property type="term" value="F:zinc ion binding"/>
    <property type="evidence" value="ECO:0007669"/>
    <property type="project" value="UniProtKB-KW"/>
</dbReference>
<dbReference type="GO" id="GO:0045944">
    <property type="term" value="P:positive regulation of transcription by RNA polymerase II"/>
    <property type="evidence" value="ECO:0007669"/>
    <property type="project" value="TreeGrafter"/>
</dbReference>
<dbReference type="FunFam" id="3.30.160.60:FF:000458">
    <property type="entry name" value="pH-response transcription factor pacC/RIM101"/>
    <property type="match status" value="1"/>
</dbReference>
<dbReference type="FunFam" id="3.30.160.60:FF:001875">
    <property type="entry name" value="pH-response transcription factor pacC/RIM101"/>
    <property type="match status" value="1"/>
</dbReference>
<dbReference type="Gene3D" id="3.30.160.60">
    <property type="entry name" value="Classic Zinc Finger"/>
    <property type="match status" value="2"/>
</dbReference>
<dbReference type="InterPro" id="IPR050806">
    <property type="entry name" value="pacC/RIM101"/>
</dbReference>
<dbReference type="InterPro" id="IPR036236">
    <property type="entry name" value="Znf_C2H2_sf"/>
</dbReference>
<dbReference type="InterPro" id="IPR013087">
    <property type="entry name" value="Znf_C2H2_type"/>
</dbReference>
<dbReference type="PANTHER" id="PTHR47257">
    <property type="entry name" value="PH-RESPONSE TRANSCRIPTION FACTOR PACC/RIM101"/>
    <property type="match status" value="1"/>
</dbReference>
<dbReference type="PANTHER" id="PTHR47257:SF1">
    <property type="entry name" value="PH-RESPONSE TRANSCRIPTION FACTOR PACC_RIM101"/>
    <property type="match status" value="1"/>
</dbReference>
<dbReference type="Pfam" id="PF00096">
    <property type="entry name" value="zf-C2H2"/>
    <property type="match status" value="1"/>
</dbReference>
<dbReference type="SMART" id="SM00355">
    <property type="entry name" value="ZnF_C2H2"/>
    <property type="match status" value="3"/>
</dbReference>
<dbReference type="SUPFAM" id="SSF57667">
    <property type="entry name" value="beta-beta-alpha zinc fingers"/>
    <property type="match status" value="2"/>
</dbReference>
<dbReference type="PROSITE" id="PS00028">
    <property type="entry name" value="ZINC_FINGER_C2H2_1"/>
    <property type="match status" value="2"/>
</dbReference>
<dbReference type="PROSITE" id="PS50157">
    <property type="entry name" value="ZINC_FINGER_C2H2_2"/>
    <property type="match status" value="2"/>
</dbReference>
<accession>Q9P413</accession>